<proteinExistence type="inferred from homology"/>
<gene>
    <name evidence="1" type="primary">truB</name>
    <name type="ordered locus">SDY_3345</name>
</gene>
<protein>
    <recommendedName>
        <fullName evidence="1">tRNA pseudouridine synthase B</fullName>
        <ecNumber evidence="1">5.4.99.25</ecNumber>
    </recommendedName>
    <alternativeName>
        <fullName evidence="1">tRNA pseudouridine(55) synthase</fullName>
        <shortName evidence="1">Psi55 synthase</shortName>
    </alternativeName>
    <alternativeName>
        <fullName evidence="1">tRNA pseudouridylate synthase</fullName>
    </alternativeName>
    <alternativeName>
        <fullName evidence="1">tRNA-uridine isomerase</fullName>
    </alternativeName>
</protein>
<comment type="function">
    <text evidence="1">Responsible for synthesis of pseudouridine from uracil-55 in the psi GC loop of transfer RNAs.</text>
</comment>
<comment type="catalytic activity">
    <reaction evidence="1">
        <text>uridine(55) in tRNA = pseudouridine(55) in tRNA</text>
        <dbReference type="Rhea" id="RHEA:42532"/>
        <dbReference type="Rhea" id="RHEA-COMP:10101"/>
        <dbReference type="Rhea" id="RHEA-COMP:10102"/>
        <dbReference type="ChEBI" id="CHEBI:65314"/>
        <dbReference type="ChEBI" id="CHEBI:65315"/>
        <dbReference type="EC" id="5.4.99.25"/>
    </reaction>
</comment>
<comment type="similarity">
    <text evidence="1">Belongs to the pseudouridine synthase TruB family. Type 1 subfamily.</text>
</comment>
<organism>
    <name type="scientific">Shigella dysenteriae serotype 1 (strain Sd197)</name>
    <dbReference type="NCBI Taxonomy" id="300267"/>
    <lineage>
        <taxon>Bacteria</taxon>
        <taxon>Pseudomonadati</taxon>
        <taxon>Pseudomonadota</taxon>
        <taxon>Gammaproteobacteria</taxon>
        <taxon>Enterobacterales</taxon>
        <taxon>Enterobacteriaceae</taxon>
        <taxon>Shigella</taxon>
    </lineage>
</organism>
<sequence length="314" mass="35044">MSRPRRRGRDINGVLLLDKPQGMSSNDALQKVKRIYNANRAGHTGALDPLATGMLPICLGEATKFSQYLLDSDKLYRVIARLGQRTDTSDADGQIVEERPVTFSAEQLAAALDTFRGDIEQIPSMYSALKYQGKKLYEYARQGIEVPREARPITVYELLFIRHEGNELELEIHCSKGTYIRTIIDDLGEKLGCGAHVIYLRRLAVSKYPVERMVTLEHLRELVEQAEQQDIPAAELLDPLLMPMDSPASDYPVVNLPLTSSVYFKNGNPVRTSGAPLEGLVRVTEGENGKFIGMGEIDDEGRVAPRRLVVEYPA</sequence>
<evidence type="ECO:0000255" key="1">
    <source>
        <dbReference type="HAMAP-Rule" id="MF_01080"/>
    </source>
</evidence>
<dbReference type="EC" id="5.4.99.25" evidence="1"/>
<dbReference type="EMBL" id="CP000034">
    <property type="protein sequence ID" value="ABB63338.1"/>
    <property type="molecule type" value="Genomic_DNA"/>
</dbReference>
<dbReference type="RefSeq" id="WP_000089690.1">
    <property type="nucleotide sequence ID" value="NC_007606.1"/>
</dbReference>
<dbReference type="RefSeq" id="YP_404829.1">
    <property type="nucleotide sequence ID" value="NC_007606.1"/>
</dbReference>
<dbReference type="SMR" id="Q32BG7"/>
<dbReference type="STRING" id="300267.SDY_3345"/>
<dbReference type="EnsemblBacteria" id="ABB63338">
    <property type="protein sequence ID" value="ABB63338"/>
    <property type="gene ID" value="SDY_3345"/>
</dbReference>
<dbReference type="KEGG" id="sdy:SDY_3345"/>
<dbReference type="PATRIC" id="fig|300267.13.peg.3999"/>
<dbReference type="HOGENOM" id="CLU_032087_0_3_6"/>
<dbReference type="Proteomes" id="UP000002716">
    <property type="component" value="Chromosome"/>
</dbReference>
<dbReference type="GO" id="GO:0003723">
    <property type="term" value="F:RNA binding"/>
    <property type="evidence" value="ECO:0007669"/>
    <property type="project" value="InterPro"/>
</dbReference>
<dbReference type="GO" id="GO:0160148">
    <property type="term" value="F:tRNA pseudouridine(55) synthase activity"/>
    <property type="evidence" value="ECO:0007669"/>
    <property type="project" value="UniProtKB-EC"/>
</dbReference>
<dbReference type="GO" id="GO:1990481">
    <property type="term" value="P:mRNA pseudouridine synthesis"/>
    <property type="evidence" value="ECO:0007669"/>
    <property type="project" value="TreeGrafter"/>
</dbReference>
<dbReference type="GO" id="GO:0031119">
    <property type="term" value="P:tRNA pseudouridine synthesis"/>
    <property type="evidence" value="ECO:0007669"/>
    <property type="project" value="UniProtKB-UniRule"/>
</dbReference>
<dbReference type="CDD" id="cd02573">
    <property type="entry name" value="PseudoU_synth_EcTruB"/>
    <property type="match status" value="1"/>
</dbReference>
<dbReference type="CDD" id="cd21152">
    <property type="entry name" value="PUA_TruB_bacterial"/>
    <property type="match status" value="1"/>
</dbReference>
<dbReference type="FunFam" id="2.30.130.10:FF:000004">
    <property type="entry name" value="tRNA pseudouridine synthase B"/>
    <property type="match status" value="1"/>
</dbReference>
<dbReference type="FunFam" id="3.30.2350.10:FF:000003">
    <property type="entry name" value="tRNA pseudouridine synthase B"/>
    <property type="match status" value="1"/>
</dbReference>
<dbReference type="Gene3D" id="3.30.2350.10">
    <property type="entry name" value="Pseudouridine synthase"/>
    <property type="match status" value="1"/>
</dbReference>
<dbReference type="Gene3D" id="2.30.130.10">
    <property type="entry name" value="PUA domain"/>
    <property type="match status" value="1"/>
</dbReference>
<dbReference type="HAMAP" id="MF_01080">
    <property type="entry name" value="TruB_bact"/>
    <property type="match status" value="1"/>
</dbReference>
<dbReference type="InterPro" id="IPR020103">
    <property type="entry name" value="PsdUridine_synth_cat_dom_sf"/>
</dbReference>
<dbReference type="InterPro" id="IPR002501">
    <property type="entry name" value="PsdUridine_synth_N"/>
</dbReference>
<dbReference type="InterPro" id="IPR015947">
    <property type="entry name" value="PUA-like_sf"/>
</dbReference>
<dbReference type="InterPro" id="IPR036974">
    <property type="entry name" value="PUA_sf"/>
</dbReference>
<dbReference type="InterPro" id="IPR014780">
    <property type="entry name" value="tRNA_psdUridine_synth_TruB"/>
</dbReference>
<dbReference type="InterPro" id="IPR015240">
    <property type="entry name" value="tRNA_sdUridine_synth_fam1_C"/>
</dbReference>
<dbReference type="InterPro" id="IPR032819">
    <property type="entry name" value="TruB_C"/>
</dbReference>
<dbReference type="NCBIfam" id="TIGR00431">
    <property type="entry name" value="TruB"/>
    <property type="match status" value="1"/>
</dbReference>
<dbReference type="PANTHER" id="PTHR13767:SF2">
    <property type="entry name" value="PSEUDOURIDYLATE SYNTHASE TRUB1"/>
    <property type="match status" value="1"/>
</dbReference>
<dbReference type="PANTHER" id="PTHR13767">
    <property type="entry name" value="TRNA-PSEUDOURIDINE SYNTHASE"/>
    <property type="match status" value="1"/>
</dbReference>
<dbReference type="Pfam" id="PF09157">
    <property type="entry name" value="TruB-C_2"/>
    <property type="match status" value="1"/>
</dbReference>
<dbReference type="Pfam" id="PF16198">
    <property type="entry name" value="TruB_C_2"/>
    <property type="match status" value="1"/>
</dbReference>
<dbReference type="Pfam" id="PF01509">
    <property type="entry name" value="TruB_N"/>
    <property type="match status" value="1"/>
</dbReference>
<dbReference type="SUPFAM" id="SSF55120">
    <property type="entry name" value="Pseudouridine synthase"/>
    <property type="match status" value="1"/>
</dbReference>
<dbReference type="SUPFAM" id="SSF88697">
    <property type="entry name" value="PUA domain-like"/>
    <property type="match status" value="1"/>
</dbReference>
<name>TRUB_SHIDS</name>
<accession>Q32BG7</accession>
<reference key="1">
    <citation type="journal article" date="2005" name="Nucleic Acids Res.">
        <title>Genome dynamics and diversity of Shigella species, the etiologic agents of bacillary dysentery.</title>
        <authorList>
            <person name="Yang F."/>
            <person name="Yang J."/>
            <person name="Zhang X."/>
            <person name="Chen L."/>
            <person name="Jiang Y."/>
            <person name="Yan Y."/>
            <person name="Tang X."/>
            <person name="Wang J."/>
            <person name="Xiong Z."/>
            <person name="Dong J."/>
            <person name="Xue Y."/>
            <person name="Zhu Y."/>
            <person name="Xu X."/>
            <person name="Sun L."/>
            <person name="Chen S."/>
            <person name="Nie H."/>
            <person name="Peng J."/>
            <person name="Xu J."/>
            <person name="Wang Y."/>
            <person name="Yuan Z."/>
            <person name="Wen Y."/>
            <person name="Yao Z."/>
            <person name="Shen Y."/>
            <person name="Qiang B."/>
            <person name="Hou Y."/>
            <person name="Yu J."/>
            <person name="Jin Q."/>
        </authorList>
    </citation>
    <scope>NUCLEOTIDE SEQUENCE [LARGE SCALE GENOMIC DNA]</scope>
    <source>
        <strain>Sd197</strain>
    </source>
</reference>
<keyword id="KW-0413">Isomerase</keyword>
<keyword id="KW-1185">Reference proteome</keyword>
<keyword id="KW-0819">tRNA processing</keyword>
<feature type="chain" id="PRO_0000229382" description="tRNA pseudouridine synthase B">
    <location>
        <begin position="1"/>
        <end position="314"/>
    </location>
</feature>
<feature type="active site" description="Nucleophile" evidence="1">
    <location>
        <position position="48"/>
    </location>
</feature>
<feature type="binding site" evidence="1">
    <location>
        <position position="43"/>
    </location>
    <ligand>
        <name>substrate</name>
    </ligand>
</feature>
<feature type="binding site" evidence="1">
    <location>
        <position position="76"/>
    </location>
    <ligand>
        <name>substrate</name>
    </ligand>
</feature>
<feature type="binding site" evidence="1">
    <location>
        <position position="179"/>
    </location>
    <ligand>
        <name>substrate</name>
    </ligand>
</feature>
<feature type="binding site" evidence="1">
    <location>
        <position position="200"/>
    </location>
    <ligand>
        <name>substrate</name>
    </ligand>
</feature>